<gene>
    <name evidence="6" type="primary">Srd5a3</name>
</gene>
<protein>
    <recommendedName>
        <fullName evidence="5">Polyprenal reductase</fullName>
        <ecNumber evidence="1">1.3.1.94</ecNumber>
    </recommendedName>
    <alternativeName>
        <fullName>3-oxo-5-alpha-steroid 4-dehydrogenase 3</fullName>
        <ecNumber evidence="1">1.3.1.22</ecNumber>
    </alternativeName>
    <alternativeName>
        <fullName>Steroid 5-alpha-reductase 3</fullName>
        <shortName>S5AR 3</shortName>
        <shortName>SR type 3</shortName>
    </alternativeName>
</protein>
<organism>
    <name type="scientific">Rattus norvegicus</name>
    <name type="common">Rat</name>
    <dbReference type="NCBI Taxonomy" id="10116"/>
    <lineage>
        <taxon>Eukaryota</taxon>
        <taxon>Metazoa</taxon>
        <taxon>Chordata</taxon>
        <taxon>Craniata</taxon>
        <taxon>Vertebrata</taxon>
        <taxon>Euteleostomi</taxon>
        <taxon>Mammalia</taxon>
        <taxon>Eutheria</taxon>
        <taxon>Euarchontoglires</taxon>
        <taxon>Glires</taxon>
        <taxon>Rodentia</taxon>
        <taxon>Myomorpha</taxon>
        <taxon>Muroidea</taxon>
        <taxon>Muridae</taxon>
        <taxon>Murinae</taxon>
        <taxon>Rattus</taxon>
    </lineage>
</organism>
<sequence length="330" mass="38092">MAGWAGAELSVLNPLRALWLLLAAAFLLALLLQLAPARLLPSCALFQDLIRYGKTKQSGSRRPAVCRAFDVPKRYFSHFYVVSVLWNGSLLWFLSQSLFLGAPFPSWLWALLRTLGVTQFQALGMESKASRIQGKKLALSTFLVLVFLWVHSLRRLFECFYVSVFSNTAIHVVQYCFGLVYYVLVGLTVLSQVPMNDKNVYALGKNLLLQARWFHILGMMMFFWSSAHQYKCHVILSNLRRNKKGVVIHCQHRIPFGDWFEYVSSANYLAELMIYISMAVTFGLHNVTWWLVVTYVFFSQALSAFFNHRFYKSTFVSYPKHRKAFLPFLF</sequence>
<comment type="function">
    <text evidence="1 3">Plays a key role in early steps of protein N-linked glycosylation by being involved in the conversion of polyprenol into dolichol (PubMed:8486680). Acts as a polyprenal reductase that mediates the reduction of polyprenal into dolichal in a NADP-dependent mechanism (By similarity). Dolichols are required for the synthesis of dolichol-linked monosaccharides and the oligosaccharide precursor used for N-glycosylation (PubMed:8486680). Also able to convert testosterone (T) into 5-alpha-dihydrotestosterone (DHT) (By similarity).</text>
</comment>
<comment type="catalytic activity">
    <reaction evidence="1">
        <text>a di-trans,poly-cis-dolichal + NADP(+) = a di-trans,poly-cis-polyprenal + NADPH + H(+)</text>
        <dbReference type="Rhea" id="RHEA:80727"/>
        <dbReference type="Rhea" id="RHEA-COMP:19536"/>
        <dbReference type="Rhea" id="RHEA-COMP:19537"/>
        <dbReference type="ChEBI" id="CHEBI:15378"/>
        <dbReference type="ChEBI" id="CHEBI:57783"/>
        <dbReference type="ChEBI" id="CHEBI:58349"/>
        <dbReference type="ChEBI" id="CHEBI:231623"/>
        <dbReference type="ChEBI" id="CHEBI:231637"/>
        <dbReference type="EC" id="1.3.1.94"/>
    </reaction>
    <physiologicalReaction direction="right-to-left" evidence="1">
        <dbReference type="Rhea" id="RHEA:80729"/>
    </physiologicalReaction>
</comment>
<comment type="catalytic activity">
    <reaction evidence="1">
        <text>a 3-oxo-5alpha-steroid + NADP(+) = a 3-oxo-Delta(4)-steroid + NADPH + H(+)</text>
        <dbReference type="Rhea" id="RHEA:54384"/>
        <dbReference type="ChEBI" id="CHEBI:13601"/>
        <dbReference type="ChEBI" id="CHEBI:15378"/>
        <dbReference type="ChEBI" id="CHEBI:47909"/>
        <dbReference type="ChEBI" id="CHEBI:57783"/>
        <dbReference type="ChEBI" id="CHEBI:58349"/>
        <dbReference type="EC" id="1.3.1.22"/>
    </reaction>
    <physiologicalReaction direction="right-to-left" evidence="1">
        <dbReference type="Rhea" id="RHEA:54386"/>
    </physiologicalReaction>
</comment>
<comment type="catalytic activity">
    <reaction evidence="1">
        <text>androst-4-ene-3,17-dione + NADPH + H(+) = 5alpha-androstan-3,17-dione + NADP(+)</text>
        <dbReference type="Rhea" id="RHEA:50816"/>
        <dbReference type="ChEBI" id="CHEBI:15378"/>
        <dbReference type="ChEBI" id="CHEBI:15994"/>
        <dbReference type="ChEBI" id="CHEBI:16422"/>
        <dbReference type="ChEBI" id="CHEBI:57783"/>
        <dbReference type="ChEBI" id="CHEBI:58349"/>
    </reaction>
    <physiologicalReaction direction="right-to-left" evidence="1">
        <dbReference type="Rhea" id="RHEA:50818"/>
    </physiologicalReaction>
</comment>
<comment type="catalytic activity">
    <reaction evidence="1">
        <text>17beta-hydroxy-5alpha-androstan-3-one + NADP(+) = testosterone + NADPH + H(+)</text>
        <dbReference type="Rhea" id="RHEA:50820"/>
        <dbReference type="ChEBI" id="CHEBI:15378"/>
        <dbReference type="ChEBI" id="CHEBI:16330"/>
        <dbReference type="ChEBI" id="CHEBI:17347"/>
        <dbReference type="ChEBI" id="CHEBI:57783"/>
        <dbReference type="ChEBI" id="CHEBI:58349"/>
        <dbReference type="EC" id="1.3.1.22"/>
    </reaction>
    <physiologicalReaction direction="right-to-left" evidence="1">
        <dbReference type="Rhea" id="RHEA:50822"/>
    </physiologicalReaction>
</comment>
<comment type="pathway">
    <text evidence="3">Protein modification; protein glycosylation.</text>
</comment>
<comment type="subcellular location">
    <subcellularLocation>
        <location evidence="3">Endoplasmic reticulum membrane</location>
        <topology evidence="3">Multi-pass membrane protein</topology>
    </subcellularLocation>
</comment>
<comment type="alternative products">
    <event type="alternative splicing"/>
    <isoform>
        <id>Q5RJM1-1</id>
        <name>1</name>
        <sequence type="displayed"/>
    </isoform>
    <isoform>
        <id>Q5RJM1-2</id>
        <name>2</name>
        <sequence type="described" ref="VSP_039791"/>
    </isoform>
</comment>
<comment type="tissue specificity">
    <text evidence="3">Expressed in the 2 tissues tested i.e. testis and liver.</text>
</comment>
<comment type="similarity">
    <text evidence="5">Belongs to the steroid 5-alpha reductase family. Polyprenal reductase subfamily.</text>
</comment>
<comment type="caution">
    <text evidence="1 3">Was initially characterized as a polyprenol reductase, mediating the conversion of polyprenol into dolichol (PubMed:8486680). However, it was later shown to catalyze an intermediate step in this pathway and reduce polyprenal (By similarity).</text>
</comment>
<proteinExistence type="evidence at protein level"/>
<evidence type="ECO:0000250" key="1">
    <source>
        <dbReference type="UniProtKB" id="Q9H8P0"/>
    </source>
</evidence>
<evidence type="ECO:0000255" key="2"/>
<evidence type="ECO:0000269" key="3">
    <source>
    </source>
</evidence>
<evidence type="ECO:0000303" key="4">
    <source>
    </source>
</evidence>
<evidence type="ECO:0000305" key="5"/>
<evidence type="ECO:0000312" key="6">
    <source>
        <dbReference type="RGD" id="1308828"/>
    </source>
</evidence>
<dbReference type="EC" id="1.3.1.94" evidence="1"/>
<dbReference type="EC" id="1.3.1.22" evidence="1"/>
<dbReference type="EMBL" id="BC086584">
    <property type="protein sequence ID" value="AAH86584.1"/>
    <property type="molecule type" value="mRNA"/>
</dbReference>
<dbReference type="RefSeq" id="NP_001014012.1">
    <property type="nucleotide sequence ID" value="NM_001013990.1"/>
</dbReference>
<dbReference type="SMR" id="Q5RJM1"/>
<dbReference type="FunCoup" id="Q5RJM1">
    <property type="interactions" value="856"/>
</dbReference>
<dbReference type="STRING" id="10116.ENSRNOP00000069749"/>
<dbReference type="PhosphoSitePlus" id="Q5RJM1"/>
<dbReference type="PaxDb" id="10116-ENSRNOP00000003021"/>
<dbReference type="GeneID" id="305291"/>
<dbReference type="KEGG" id="rno:305291"/>
<dbReference type="UCSC" id="RGD:1308828">
    <molecule id="Q5RJM1-1"/>
    <property type="organism name" value="rat"/>
</dbReference>
<dbReference type="AGR" id="RGD:1308828"/>
<dbReference type="CTD" id="79644"/>
<dbReference type="RGD" id="1308828">
    <property type="gene designation" value="Srd5a3"/>
</dbReference>
<dbReference type="eggNOG" id="KOG1640">
    <property type="taxonomic scope" value="Eukaryota"/>
</dbReference>
<dbReference type="HOGENOM" id="CLU_1677319_0_0_1"/>
<dbReference type="InParanoid" id="Q5RJM1"/>
<dbReference type="PhylomeDB" id="Q5RJM1"/>
<dbReference type="TreeFam" id="TF315011"/>
<dbReference type="Reactome" id="R-RNO-193048">
    <property type="pathway name" value="Androgen biosynthesis"/>
</dbReference>
<dbReference type="Reactome" id="R-RNO-446199">
    <property type="pathway name" value="Synthesis of Dolichyl-phosphate"/>
</dbReference>
<dbReference type="UniPathway" id="UPA00378"/>
<dbReference type="PRO" id="PR:Q5RJM1"/>
<dbReference type="Proteomes" id="UP000002494">
    <property type="component" value="Chromosome 14"/>
</dbReference>
<dbReference type="Bgee" id="ENSRNOG00000002216">
    <property type="expression patterns" value="Expressed in ovary and 20 other cell types or tissues"/>
</dbReference>
<dbReference type="ExpressionAtlas" id="Q5RJM1">
    <property type="expression patterns" value="baseline and differential"/>
</dbReference>
<dbReference type="GO" id="GO:0005783">
    <property type="term" value="C:endoplasmic reticulum"/>
    <property type="evidence" value="ECO:0000250"/>
    <property type="project" value="UniProtKB"/>
</dbReference>
<dbReference type="GO" id="GO:0005789">
    <property type="term" value="C:endoplasmic reticulum membrane"/>
    <property type="evidence" value="ECO:0000266"/>
    <property type="project" value="RGD"/>
</dbReference>
<dbReference type="GO" id="GO:0047751">
    <property type="term" value="F:3-oxo-5-alpha-steroid 4-dehydrogenase (NADP+) activity"/>
    <property type="evidence" value="ECO:0000250"/>
    <property type="project" value="UniProtKB"/>
</dbReference>
<dbReference type="GO" id="GO:0016628">
    <property type="term" value="F:oxidoreductase activity, acting on the CH-CH group of donors, NAD or NADP as acceptor"/>
    <property type="evidence" value="ECO:0000250"/>
    <property type="project" value="UniProtKB"/>
</dbReference>
<dbReference type="GO" id="GO:0160198">
    <property type="term" value="F:polyprenal reductase activity"/>
    <property type="evidence" value="ECO:0000250"/>
    <property type="project" value="UniProtKB"/>
</dbReference>
<dbReference type="GO" id="GO:0102389">
    <property type="term" value="F:polyprenol reductase activity"/>
    <property type="evidence" value="ECO:0000318"/>
    <property type="project" value="GO_Central"/>
</dbReference>
<dbReference type="GO" id="GO:0019408">
    <property type="term" value="P:dolichol biosynthetic process"/>
    <property type="evidence" value="ECO:0000250"/>
    <property type="project" value="UniProtKB"/>
</dbReference>
<dbReference type="GO" id="GO:0019348">
    <property type="term" value="P:dolichol metabolic process"/>
    <property type="evidence" value="ECO:0000250"/>
    <property type="project" value="UniProtKB"/>
</dbReference>
<dbReference type="GO" id="GO:0006488">
    <property type="term" value="P:dolichol-linked oligosaccharide biosynthetic process"/>
    <property type="evidence" value="ECO:0000250"/>
    <property type="project" value="UniProtKB"/>
</dbReference>
<dbReference type="GO" id="GO:0016095">
    <property type="term" value="P:polyprenol catabolic process"/>
    <property type="evidence" value="ECO:0000250"/>
    <property type="project" value="UniProtKB"/>
</dbReference>
<dbReference type="FunFam" id="1.20.120.1630:FF:000021">
    <property type="entry name" value="Polyprenol reductase 1"/>
    <property type="match status" value="1"/>
</dbReference>
<dbReference type="InterPro" id="IPR001104">
    <property type="entry name" value="3-oxo-5_a-steroid_4-DH_C"/>
</dbReference>
<dbReference type="InterPro" id="IPR039698">
    <property type="entry name" value="Dfg10/SRD5A3"/>
</dbReference>
<dbReference type="PANTHER" id="PTHR14624">
    <property type="entry name" value="DFG10 PROTEIN"/>
    <property type="match status" value="1"/>
</dbReference>
<dbReference type="PANTHER" id="PTHR14624:SF0">
    <property type="entry name" value="POLYPRENOL REDUCTASE"/>
    <property type="match status" value="1"/>
</dbReference>
<dbReference type="Pfam" id="PF02544">
    <property type="entry name" value="Steroid_dh"/>
    <property type="match status" value="1"/>
</dbReference>
<dbReference type="PROSITE" id="PS50244">
    <property type="entry name" value="S5A_REDUCTASE"/>
    <property type="match status" value="1"/>
</dbReference>
<accession>Q5RJM1</accession>
<accession>D3ZUS5</accession>
<accession>D4A5U7</accession>
<reference key="1">
    <citation type="journal article" date="2004" name="Nature">
        <title>Genome sequence of the Brown Norway rat yields insights into mammalian evolution.</title>
        <authorList>
            <person name="Gibbs R.A."/>
            <person name="Weinstock G.M."/>
            <person name="Metzker M.L."/>
            <person name="Muzny D.M."/>
            <person name="Sodergren E.J."/>
            <person name="Scherer S."/>
            <person name="Scott G."/>
            <person name="Steffen D."/>
            <person name="Worley K.C."/>
            <person name="Burch P.E."/>
            <person name="Okwuonu G."/>
            <person name="Hines S."/>
            <person name="Lewis L."/>
            <person name="Deramo C."/>
            <person name="Delgado O."/>
            <person name="Dugan-Rocha S."/>
            <person name="Miner G."/>
            <person name="Morgan M."/>
            <person name="Hawes A."/>
            <person name="Gill R."/>
            <person name="Holt R.A."/>
            <person name="Adams M.D."/>
            <person name="Amanatides P.G."/>
            <person name="Baden-Tillson H."/>
            <person name="Barnstead M."/>
            <person name="Chin S."/>
            <person name="Evans C.A."/>
            <person name="Ferriera S."/>
            <person name="Fosler C."/>
            <person name="Glodek A."/>
            <person name="Gu Z."/>
            <person name="Jennings D."/>
            <person name="Kraft C.L."/>
            <person name="Nguyen T."/>
            <person name="Pfannkoch C.M."/>
            <person name="Sitter C."/>
            <person name="Sutton G.G."/>
            <person name="Venter J.C."/>
            <person name="Woodage T."/>
            <person name="Smith D."/>
            <person name="Lee H.-M."/>
            <person name="Gustafson E."/>
            <person name="Cahill P."/>
            <person name="Kana A."/>
            <person name="Doucette-Stamm L."/>
            <person name="Weinstock K."/>
            <person name="Fechtel K."/>
            <person name="Weiss R.B."/>
            <person name="Dunn D.M."/>
            <person name="Green E.D."/>
            <person name="Blakesley R.W."/>
            <person name="Bouffard G.G."/>
            <person name="De Jong P.J."/>
            <person name="Osoegawa K."/>
            <person name="Zhu B."/>
            <person name="Marra M."/>
            <person name="Schein J."/>
            <person name="Bosdet I."/>
            <person name="Fjell C."/>
            <person name="Jones S."/>
            <person name="Krzywinski M."/>
            <person name="Mathewson C."/>
            <person name="Siddiqui A."/>
            <person name="Wye N."/>
            <person name="McPherson J."/>
            <person name="Zhao S."/>
            <person name="Fraser C.M."/>
            <person name="Shetty J."/>
            <person name="Shatsman S."/>
            <person name="Geer K."/>
            <person name="Chen Y."/>
            <person name="Abramzon S."/>
            <person name="Nierman W.C."/>
            <person name="Havlak P.H."/>
            <person name="Chen R."/>
            <person name="Durbin K.J."/>
            <person name="Egan A."/>
            <person name="Ren Y."/>
            <person name="Song X.-Z."/>
            <person name="Li B."/>
            <person name="Liu Y."/>
            <person name="Qin X."/>
            <person name="Cawley S."/>
            <person name="Cooney A.J."/>
            <person name="D'Souza L.M."/>
            <person name="Martin K."/>
            <person name="Wu J.Q."/>
            <person name="Gonzalez-Garay M.L."/>
            <person name="Jackson A.R."/>
            <person name="Kalafus K.J."/>
            <person name="McLeod M.P."/>
            <person name="Milosavljevic A."/>
            <person name="Virk D."/>
            <person name="Volkov A."/>
            <person name="Wheeler D.A."/>
            <person name="Zhang Z."/>
            <person name="Bailey J.A."/>
            <person name="Eichler E.E."/>
            <person name="Tuzun E."/>
            <person name="Birney E."/>
            <person name="Mongin E."/>
            <person name="Ureta-Vidal A."/>
            <person name="Woodwark C."/>
            <person name="Zdobnov E."/>
            <person name="Bork P."/>
            <person name="Suyama M."/>
            <person name="Torrents D."/>
            <person name="Alexandersson M."/>
            <person name="Trask B.J."/>
            <person name="Young J.M."/>
            <person name="Huang H."/>
            <person name="Wang H."/>
            <person name="Xing H."/>
            <person name="Daniels S."/>
            <person name="Gietzen D."/>
            <person name="Schmidt J."/>
            <person name="Stevens K."/>
            <person name="Vitt U."/>
            <person name="Wingrove J."/>
            <person name="Camara F."/>
            <person name="Mar Alba M."/>
            <person name="Abril J.F."/>
            <person name="Guigo R."/>
            <person name="Smit A."/>
            <person name="Dubchak I."/>
            <person name="Rubin E.M."/>
            <person name="Couronne O."/>
            <person name="Poliakov A."/>
            <person name="Huebner N."/>
            <person name="Ganten D."/>
            <person name="Goesele C."/>
            <person name="Hummel O."/>
            <person name="Kreitler T."/>
            <person name="Lee Y.-A."/>
            <person name="Monti J."/>
            <person name="Schulz H."/>
            <person name="Zimdahl H."/>
            <person name="Himmelbauer H."/>
            <person name="Lehrach H."/>
            <person name="Jacob H.J."/>
            <person name="Bromberg S."/>
            <person name="Gullings-Handley J."/>
            <person name="Jensen-Seaman M.I."/>
            <person name="Kwitek A.E."/>
            <person name="Lazar J."/>
            <person name="Pasko D."/>
            <person name="Tonellato P.J."/>
            <person name="Twigger S."/>
            <person name="Ponting C.P."/>
            <person name="Duarte J.M."/>
            <person name="Rice S."/>
            <person name="Goodstadt L."/>
            <person name="Beatson S.A."/>
            <person name="Emes R.D."/>
            <person name="Winter E.E."/>
            <person name="Webber C."/>
            <person name="Brandt P."/>
            <person name="Nyakatura G."/>
            <person name="Adetobi M."/>
            <person name="Chiaromonte F."/>
            <person name="Elnitski L."/>
            <person name="Eswara P."/>
            <person name="Hardison R.C."/>
            <person name="Hou M."/>
            <person name="Kolbe D."/>
            <person name="Makova K."/>
            <person name="Miller W."/>
            <person name="Nekrutenko A."/>
            <person name="Riemer C."/>
            <person name="Schwartz S."/>
            <person name="Taylor J."/>
            <person name="Yang S."/>
            <person name="Zhang Y."/>
            <person name="Lindpaintner K."/>
            <person name="Andrews T.D."/>
            <person name="Caccamo M."/>
            <person name="Clamp M."/>
            <person name="Clarke L."/>
            <person name="Curwen V."/>
            <person name="Durbin R.M."/>
            <person name="Eyras E."/>
            <person name="Searle S.M."/>
            <person name="Cooper G.M."/>
            <person name="Batzoglou S."/>
            <person name="Brudno M."/>
            <person name="Sidow A."/>
            <person name="Stone E.A."/>
            <person name="Payseur B.A."/>
            <person name="Bourque G."/>
            <person name="Lopez-Otin C."/>
            <person name="Puente X.S."/>
            <person name="Chakrabarti K."/>
            <person name="Chatterji S."/>
            <person name="Dewey C."/>
            <person name="Pachter L."/>
            <person name="Bray N."/>
            <person name="Yap V.B."/>
            <person name="Caspi A."/>
            <person name="Tesler G."/>
            <person name="Pevzner P.A."/>
            <person name="Haussler D."/>
            <person name="Roskin K.M."/>
            <person name="Baertsch R."/>
            <person name="Clawson H."/>
            <person name="Furey T.S."/>
            <person name="Hinrichs A.S."/>
            <person name="Karolchik D."/>
            <person name="Kent W.J."/>
            <person name="Rosenbloom K.R."/>
            <person name="Trumbower H."/>
            <person name="Weirauch M."/>
            <person name="Cooper D.N."/>
            <person name="Stenson P.D."/>
            <person name="Ma B."/>
            <person name="Brent M."/>
            <person name="Arumugam M."/>
            <person name="Shteynberg D."/>
            <person name="Copley R.R."/>
            <person name="Taylor M.S."/>
            <person name="Riethman H."/>
            <person name="Mudunuri U."/>
            <person name="Peterson J."/>
            <person name="Guyer M."/>
            <person name="Felsenfeld A."/>
            <person name="Old S."/>
            <person name="Mockrin S."/>
            <person name="Collins F.S."/>
        </authorList>
    </citation>
    <scope>NUCLEOTIDE SEQUENCE [LARGE SCALE GENOMIC DNA]</scope>
    <source>
        <strain>Brown Norway</strain>
    </source>
</reference>
<reference key="2">
    <citation type="journal article" date="2004" name="Genome Res.">
        <title>The status, quality, and expansion of the NIH full-length cDNA project: the Mammalian Gene Collection (MGC).</title>
        <authorList>
            <consortium name="The MGC Project Team"/>
        </authorList>
    </citation>
    <scope>NUCLEOTIDE SEQUENCE [LARGE SCALE MRNA] (ISOFORM 2)</scope>
    <source>
        <tissue>Ovary</tissue>
    </source>
</reference>
<reference key="3">
    <citation type="journal article" date="1993" name="J. Biol. Chem.">
        <title>Formation of dolichol from dehydrodolichol is catalyzed by NADPH-dependent reductase localized in microsomes of rat liver.</title>
        <authorList>
            <person name="Sagami H."/>
            <person name="Kurisaki A."/>
            <person name="Ogura K."/>
        </authorList>
    </citation>
    <scope>FUNCTION</scope>
    <scope>CATALYTIC ACTIVITY</scope>
    <scope>SUBCELLULAR LOCATION</scope>
    <scope>TISSUE SPECIFICITY</scope>
    <source>
        <tissue>Liver</tissue>
    </source>
</reference>
<name>SR5A3_RAT</name>
<feature type="chain" id="PRO_0000398650" description="Polyprenal reductase">
    <location>
        <begin position="1"/>
        <end position="330"/>
    </location>
</feature>
<feature type="topological domain" description="Cytoplasmic" evidence="2">
    <location>
        <begin position="1"/>
        <end position="16"/>
    </location>
</feature>
<feature type="transmembrane region" description="Helical" evidence="2">
    <location>
        <begin position="17"/>
        <end position="37"/>
    </location>
</feature>
<feature type="topological domain" description="Lumenal" evidence="2">
    <location>
        <begin position="38"/>
        <end position="89"/>
    </location>
</feature>
<feature type="transmembrane region" description="Helical" evidence="2">
    <location>
        <begin position="90"/>
        <end position="110"/>
    </location>
</feature>
<feature type="topological domain" description="Cytoplasmic" evidence="2">
    <location>
        <begin position="111"/>
        <end position="136"/>
    </location>
</feature>
<feature type="transmembrane region" description="Helical" evidence="2">
    <location>
        <begin position="137"/>
        <end position="157"/>
    </location>
</feature>
<feature type="topological domain" description="Lumenal" evidence="2">
    <location>
        <begin position="158"/>
        <end position="169"/>
    </location>
</feature>
<feature type="transmembrane region" description="Helical" evidence="2">
    <location>
        <begin position="170"/>
        <end position="190"/>
    </location>
</feature>
<feature type="topological domain" description="Cytoplasmic" evidence="2">
    <location>
        <begin position="191"/>
        <end position="206"/>
    </location>
</feature>
<feature type="transmembrane region" description="Helical" evidence="2">
    <location>
        <begin position="207"/>
        <end position="227"/>
    </location>
</feature>
<feature type="topological domain" description="Lumenal" evidence="2">
    <location>
        <begin position="228"/>
        <end position="277"/>
    </location>
</feature>
<feature type="transmembrane region" description="Helical" evidence="2">
    <location>
        <begin position="278"/>
        <end position="298"/>
    </location>
</feature>
<feature type="topological domain" description="Cytoplasmic" evidence="2">
    <location>
        <begin position="299"/>
        <end position="330"/>
    </location>
</feature>
<feature type="splice variant" id="VSP_039791" description="In isoform 2." evidence="4">
    <original>YVSSANYLAELMIYISMAVTFGLHNVTWWLVVTYVFFSQALSAFFNHRFYKSTFVSYPKHRKAFLPFLF</original>
    <variation>LYGEERSPGDRFPSSRR</variation>
    <location>
        <begin position="262"/>
        <end position="330"/>
    </location>
</feature>
<feature type="sequence conflict" description="In Ref. 2; AAH86584." evidence="5" ref="2">
    <original>GKK</original>
    <variation>AGE</variation>
    <location>
        <begin position="134"/>
        <end position="136"/>
    </location>
</feature>
<keyword id="KW-0025">Alternative splicing</keyword>
<keyword id="KW-0256">Endoplasmic reticulum</keyword>
<keyword id="KW-0443">Lipid metabolism</keyword>
<keyword id="KW-0472">Membrane</keyword>
<keyword id="KW-0521">NADP</keyword>
<keyword id="KW-0560">Oxidoreductase</keyword>
<keyword id="KW-1185">Reference proteome</keyword>
<keyword id="KW-0812">Transmembrane</keyword>
<keyword id="KW-1133">Transmembrane helix</keyword>